<proteinExistence type="inferred from homology"/>
<evidence type="ECO:0000255" key="1">
    <source>
        <dbReference type="HAMAP-Rule" id="MF_00081"/>
    </source>
</evidence>
<organism>
    <name type="scientific">Synechocystis sp. (strain ATCC 27184 / PCC 6803 / Kazusa)</name>
    <dbReference type="NCBI Taxonomy" id="1111708"/>
    <lineage>
        <taxon>Bacteria</taxon>
        <taxon>Bacillati</taxon>
        <taxon>Cyanobacteriota</taxon>
        <taxon>Cyanophyceae</taxon>
        <taxon>Synechococcales</taxon>
        <taxon>Merismopediaceae</taxon>
        <taxon>Synechocystis</taxon>
    </lineage>
</organism>
<accession>P72795</accession>
<gene>
    <name evidence="1" type="primary">hrcA</name>
    <name type="ordered locus">sll1670</name>
</gene>
<comment type="function">
    <text evidence="1">Negative regulator of class I heat shock genes (grpE-dnaK-dnaJ and groELS operons). Prevents heat-shock induction of these operons.</text>
</comment>
<comment type="similarity">
    <text evidence="1">Belongs to the HrcA family.</text>
</comment>
<sequence>MVKPLRLNDRHQQILRATVQHYIATAEPVGSHTLAQEYQFAVSSATIRNALGQLEKAGLLYQPHVSAGRVPSDSGYRIYVDNLLTWSDRQSRTVKQRLENEINGDNWHFEALIQRMGQILAGLSGYIALITFPQTETVQLRHLQLMLLPSHQILIILVTDSYHTHSATLDLPAAMEAKEEGELEQELAIFSNFLNAQLRGKNLSELSHLNWQELDQKFSIYADFLKGLQQQIKPLLQRRMAGPLVVHGVSKVIQQPEFSQLEQVQMLLSLLEQEQDKLFSLLFDPDNYGDNLANLGQEMNLLTGETMPKTRPVVTIRIGAENPLESMHPCTLVSAIYRQQEIPMGSVSILGPTRMVYQQTIPLVEQAAECLSEALSKN</sequence>
<reference key="1">
    <citation type="journal article" date="1996" name="DNA Res.">
        <title>Sequence analysis of the genome of the unicellular cyanobacterium Synechocystis sp. strain PCC6803. II. Sequence determination of the entire genome and assignment of potential protein-coding regions.</title>
        <authorList>
            <person name="Kaneko T."/>
            <person name="Sato S."/>
            <person name="Kotani H."/>
            <person name="Tanaka A."/>
            <person name="Asamizu E."/>
            <person name="Nakamura Y."/>
            <person name="Miyajima N."/>
            <person name="Hirosawa M."/>
            <person name="Sugiura M."/>
            <person name="Sasamoto S."/>
            <person name="Kimura T."/>
            <person name="Hosouchi T."/>
            <person name="Matsuno A."/>
            <person name="Muraki A."/>
            <person name="Nakazaki N."/>
            <person name="Naruo K."/>
            <person name="Okumura S."/>
            <person name="Shimpo S."/>
            <person name="Takeuchi C."/>
            <person name="Wada T."/>
            <person name="Watanabe A."/>
            <person name="Yamada M."/>
            <person name="Yasuda M."/>
            <person name="Tabata S."/>
        </authorList>
    </citation>
    <scope>NUCLEOTIDE SEQUENCE [LARGE SCALE GENOMIC DNA]</scope>
    <source>
        <strain>ATCC 27184 / PCC 6803 / Kazusa</strain>
    </source>
</reference>
<feature type="chain" id="PRO_0000182549" description="Heat-inducible transcription repressor HrcA">
    <location>
        <begin position="1"/>
        <end position="378"/>
    </location>
</feature>
<name>HRCA_SYNY3</name>
<protein>
    <recommendedName>
        <fullName evidence="1">Heat-inducible transcription repressor HrcA</fullName>
    </recommendedName>
</protein>
<dbReference type="EMBL" id="BA000022">
    <property type="protein sequence ID" value="BAA16810.1"/>
    <property type="molecule type" value="Genomic_DNA"/>
</dbReference>
<dbReference type="PIR" id="JC5689">
    <property type="entry name" value="JC5689"/>
</dbReference>
<dbReference type="SMR" id="P72795"/>
<dbReference type="FunCoup" id="P72795">
    <property type="interactions" value="185"/>
</dbReference>
<dbReference type="STRING" id="1148.gene:10497666"/>
<dbReference type="PaxDb" id="1148-1651883"/>
<dbReference type="EnsemblBacteria" id="BAA16810">
    <property type="protein sequence ID" value="BAA16810"/>
    <property type="gene ID" value="BAA16810"/>
</dbReference>
<dbReference type="KEGG" id="syn:sll1670"/>
<dbReference type="eggNOG" id="COG1420">
    <property type="taxonomic scope" value="Bacteria"/>
</dbReference>
<dbReference type="InParanoid" id="P72795"/>
<dbReference type="PhylomeDB" id="P72795"/>
<dbReference type="Proteomes" id="UP000001425">
    <property type="component" value="Chromosome"/>
</dbReference>
<dbReference type="GO" id="GO:0003677">
    <property type="term" value="F:DNA binding"/>
    <property type="evidence" value="ECO:0007669"/>
    <property type="project" value="InterPro"/>
</dbReference>
<dbReference type="GO" id="GO:0045892">
    <property type="term" value="P:negative regulation of DNA-templated transcription"/>
    <property type="evidence" value="ECO:0000318"/>
    <property type="project" value="GO_Central"/>
</dbReference>
<dbReference type="Gene3D" id="3.30.450.40">
    <property type="match status" value="1"/>
</dbReference>
<dbReference type="Gene3D" id="3.30.390.60">
    <property type="entry name" value="Heat-inducible transcription repressor hrca homolog, domain 3"/>
    <property type="match status" value="1"/>
</dbReference>
<dbReference type="Gene3D" id="1.10.10.10">
    <property type="entry name" value="Winged helix-like DNA-binding domain superfamily/Winged helix DNA-binding domain"/>
    <property type="match status" value="1"/>
</dbReference>
<dbReference type="HAMAP" id="MF_00081">
    <property type="entry name" value="HrcA"/>
    <property type="match status" value="1"/>
</dbReference>
<dbReference type="InterPro" id="IPR029016">
    <property type="entry name" value="GAF-like_dom_sf"/>
</dbReference>
<dbReference type="InterPro" id="IPR002571">
    <property type="entry name" value="HrcA"/>
</dbReference>
<dbReference type="InterPro" id="IPR021153">
    <property type="entry name" value="HrcA_C"/>
</dbReference>
<dbReference type="InterPro" id="IPR036388">
    <property type="entry name" value="WH-like_DNA-bd_sf"/>
</dbReference>
<dbReference type="InterPro" id="IPR036390">
    <property type="entry name" value="WH_DNA-bd_sf"/>
</dbReference>
<dbReference type="InterPro" id="IPR023120">
    <property type="entry name" value="WHTH_transcript_rep_HrcA_IDD"/>
</dbReference>
<dbReference type="NCBIfam" id="TIGR00331">
    <property type="entry name" value="hrcA"/>
    <property type="match status" value="1"/>
</dbReference>
<dbReference type="PANTHER" id="PTHR34824">
    <property type="entry name" value="HEAT-INDUCIBLE TRANSCRIPTION REPRESSOR HRCA"/>
    <property type="match status" value="1"/>
</dbReference>
<dbReference type="PANTHER" id="PTHR34824:SF1">
    <property type="entry name" value="HEAT-INDUCIBLE TRANSCRIPTION REPRESSOR HRCA"/>
    <property type="match status" value="1"/>
</dbReference>
<dbReference type="Pfam" id="PF01628">
    <property type="entry name" value="HrcA"/>
    <property type="match status" value="1"/>
</dbReference>
<dbReference type="PIRSF" id="PIRSF005485">
    <property type="entry name" value="HrcA"/>
    <property type="match status" value="1"/>
</dbReference>
<dbReference type="SUPFAM" id="SSF55781">
    <property type="entry name" value="GAF domain-like"/>
    <property type="match status" value="1"/>
</dbReference>
<dbReference type="SUPFAM" id="SSF46785">
    <property type="entry name" value="Winged helix' DNA-binding domain"/>
    <property type="match status" value="1"/>
</dbReference>
<keyword id="KW-1185">Reference proteome</keyword>
<keyword id="KW-0678">Repressor</keyword>
<keyword id="KW-0346">Stress response</keyword>
<keyword id="KW-0804">Transcription</keyword>
<keyword id="KW-0805">Transcription regulation</keyword>